<reference key="1">
    <citation type="journal article" date="1995" name="Plant Mol. Biol. Rep.">
        <title>Nucleotide sequence of the cyanelle DNA from Cyanophora paradoxa.</title>
        <authorList>
            <person name="Stirewalt V.L."/>
            <person name="Michalowski C.B."/>
            <person name="Loeffelhardt W."/>
            <person name="Bohnert H.J."/>
            <person name="Bryant D.A."/>
        </authorList>
    </citation>
    <scope>NUCLEOTIDE SEQUENCE [LARGE SCALE GENOMIC DNA]</scope>
    <source>
        <strain>UTEX LB 555 / Pringsheim</strain>
    </source>
</reference>
<reference key="2">
    <citation type="book" date="1997" name="Eukaryotism and symbiosis">
        <title>The complete sequence of the cyanelle genome of Cyanophora paradoxa: the genetic complexity of a primitive plastid.</title>
        <editorList>
            <person name="Schenk H.E.A."/>
            <person name="Herrmann R."/>
            <person name="Jeon K.W."/>
            <person name="Mueller N.E."/>
            <person name="Schwemmler W."/>
        </editorList>
        <authorList>
            <person name="Loeffelhardt W."/>
            <person name="Stirewalt V.L."/>
            <person name="Michalowski C.B."/>
            <person name="Annarella M."/>
            <person name="Farley J.Y."/>
            <person name="Schluchter W.M."/>
            <person name="Chung S."/>
            <person name="Newmann-Spallart C."/>
            <person name="Steiner J.M."/>
            <person name="Jakowitsch J."/>
            <person name="Bohnert H.J."/>
            <person name="Bryant D.A."/>
        </authorList>
    </citation>
    <scope>NUCLEOTIDE SEQUENCE [LARGE SCALE GENOMIC DNA]</scope>
    <source>
        <strain>UTEX LB 555 / Pringsheim</strain>
    </source>
</reference>
<evidence type="ECO:0000250" key="1"/>
<evidence type="ECO:0000255" key="2"/>
<evidence type="ECO:0000305" key="3"/>
<evidence type="ECO:0007829" key="4">
    <source>
        <dbReference type="PDB" id="7DR1"/>
    </source>
</evidence>
<geneLocation type="cyanelle"/>
<keyword id="KW-0002">3D-structure</keyword>
<keyword id="KW-0194">Cyanelle</keyword>
<keyword id="KW-0472">Membrane</keyword>
<keyword id="KW-0602">Photosynthesis</keyword>
<keyword id="KW-0603">Photosystem I</keyword>
<keyword id="KW-0934">Plastid</keyword>
<keyword id="KW-0793">Thylakoid</keyword>
<keyword id="KW-0812">Transmembrane</keyword>
<keyword id="KW-1133">Transmembrane helix</keyword>
<sequence length="31" mass="3332">MLADGQIFTALAVALVPGILALRLALELYKF</sequence>
<gene>
    <name type="primary">psaM</name>
</gene>
<organism>
    <name type="scientific">Cyanophora paradoxa</name>
    <dbReference type="NCBI Taxonomy" id="2762"/>
    <lineage>
        <taxon>Eukaryota</taxon>
        <taxon>Glaucocystophyceae</taxon>
        <taxon>Cyanophoraceae</taxon>
        <taxon>Cyanophora</taxon>
    </lineage>
</organism>
<proteinExistence type="evidence at protein level"/>
<feature type="chain" id="PRO_0000207757" description="Photosystem I reaction center subunit XII">
    <location>
        <begin position="1"/>
        <end position="31"/>
    </location>
</feature>
<feature type="transmembrane region" description="Helical" evidence="2">
    <location>
        <begin position="7"/>
        <end position="26"/>
    </location>
</feature>
<feature type="helix" evidence="4">
    <location>
        <begin position="4"/>
        <end position="13"/>
    </location>
</feature>
<feature type="helix" evidence="4">
    <location>
        <begin position="15"/>
        <end position="29"/>
    </location>
</feature>
<comment type="subcellular location">
    <subcellularLocation>
        <location evidence="1">Plastid</location>
        <location evidence="1">Cyanelle thylakoid membrane</location>
        <topology evidence="1">Single-pass membrane protein</topology>
    </subcellularLocation>
</comment>
<comment type="similarity">
    <text evidence="3">Belongs to the PsaM family.</text>
</comment>
<name>PSAM_CYAPA</name>
<dbReference type="EMBL" id="U30821">
    <property type="protein sequence ID" value="AAA81277.1"/>
    <property type="molecule type" value="Genomic_DNA"/>
</dbReference>
<dbReference type="PIR" id="T06934">
    <property type="entry name" value="T06934"/>
</dbReference>
<dbReference type="RefSeq" id="NP_043246.1">
    <property type="nucleotide sequence ID" value="NC_001675.1"/>
</dbReference>
<dbReference type="PDB" id="7DR0">
    <property type="method" value="EM"/>
    <property type="resolution" value="3.30 A"/>
    <property type="chains" value="M=1-31"/>
</dbReference>
<dbReference type="PDB" id="7DR1">
    <property type="method" value="EM"/>
    <property type="resolution" value="3.20 A"/>
    <property type="chains" value="M=1-31"/>
</dbReference>
<dbReference type="PDB" id="7DR2">
    <property type="method" value="EM"/>
    <property type="resolution" value="3.80 A"/>
    <property type="chains" value="aM/bM/cM/dM=1-31"/>
</dbReference>
<dbReference type="PDBsum" id="7DR0"/>
<dbReference type="PDBsum" id="7DR1"/>
<dbReference type="PDBsum" id="7DR2"/>
<dbReference type="EMDB" id="EMD-30820"/>
<dbReference type="EMDB" id="EMD-30821"/>
<dbReference type="EMDB" id="EMD-30823"/>
<dbReference type="SMR" id="P48185"/>
<dbReference type="GeneID" id="801623"/>
<dbReference type="GO" id="GO:0033115">
    <property type="term" value="C:cyanelle thylakoid membrane"/>
    <property type="evidence" value="ECO:0007669"/>
    <property type="project" value="UniProtKB-SubCell"/>
</dbReference>
<dbReference type="GO" id="GO:0009522">
    <property type="term" value="C:photosystem I"/>
    <property type="evidence" value="ECO:0007669"/>
    <property type="project" value="UniProtKB-KW"/>
</dbReference>
<dbReference type="GO" id="GO:0015979">
    <property type="term" value="P:photosynthesis"/>
    <property type="evidence" value="ECO:0007669"/>
    <property type="project" value="UniProtKB-UniRule"/>
</dbReference>
<dbReference type="HAMAP" id="MF_00828">
    <property type="entry name" value="PSI_PsaM"/>
    <property type="match status" value="1"/>
</dbReference>
<dbReference type="InterPro" id="IPR010010">
    <property type="entry name" value="PSI_PsaM"/>
</dbReference>
<dbReference type="InterPro" id="IPR037279">
    <property type="entry name" value="PSI_PsaM_sf"/>
</dbReference>
<dbReference type="NCBIfam" id="TIGR03053">
    <property type="entry name" value="PS_I_psaM"/>
    <property type="match status" value="1"/>
</dbReference>
<dbReference type="Pfam" id="PF07465">
    <property type="entry name" value="PsaM"/>
    <property type="match status" value="1"/>
</dbReference>
<dbReference type="SUPFAM" id="SSF81548">
    <property type="entry name" value="Subunit XII of photosystem I reaction centre, PsaM"/>
    <property type="match status" value="1"/>
</dbReference>
<protein>
    <recommendedName>
        <fullName>Photosystem I reaction center subunit XII</fullName>
    </recommendedName>
    <alternativeName>
        <fullName>PSI-M</fullName>
    </alternativeName>
</protein>
<accession>P48185</accession>